<reference key="1">
    <citation type="journal article" date="1993" name="Plant Mol. Biol.">
        <title>Organisation of the tomato polyphenol oxidase gene family.</title>
        <authorList>
            <person name="Newman S.M."/>
            <person name="Eannetta N.T."/>
            <person name="Yu H."/>
            <person name="Prince J.P."/>
            <person name="de Vicente M.C."/>
            <person name="Tanksley S.D."/>
            <person name="Steffens J.C."/>
        </authorList>
    </citation>
    <scope>NUCLEOTIDE SEQUENCE [GENOMIC DNA]</scope>
    <source>
        <strain>cv. VFNT Cherry</strain>
    </source>
</reference>
<evidence type="ECO:0000250" key="1"/>
<evidence type="ECO:0000250" key="2">
    <source>
        <dbReference type="UniProtKB" id="Q9ZP19"/>
    </source>
</evidence>
<evidence type="ECO:0000256" key="3">
    <source>
        <dbReference type="SAM" id="MobiDB-lite"/>
    </source>
</evidence>
<evidence type="ECO:0000305" key="4"/>
<evidence type="ECO:0007829" key="5">
    <source>
        <dbReference type="PDB" id="6HQJ"/>
    </source>
</evidence>
<name>PPOA_SOLLC</name>
<comment type="function">
    <text>Catalyzes the oxidation of mono- and o-diphenols to o-diquinones.</text>
</comment>
<comment type="catalytic activity">
    <reaction>
        <text>2 catechol + O2 = 2 1,2-benzoquinone + 2 H2O</text>
        <dbReference type="Rhea" id="RHEA:21632"/>
        <dbReference type="ChEBI" id="CHEBI:15377"/>
        <dbReference type="ChEBI" id="CHEBI:15379"/>
        <dbReference type="ChEBI" id="CHEBI:17253"/>
        <dbReference type="ChEBI" id="CHEBI:18135"/>
        <dbReference type="EC" id="1.10.3.1"/>
    </reaction>
</comment>
<comment type="cofactor">
    <cofactor evidence="2">
        <name>Cu(2+)</name>
        <dbReference type="ChEBI" id="CHEBI:29036"/>
    </cofactor>
    <text evidence="2">Binds 2 copper ions per subunit.</text>
</comment>
<comment type="subcellular location">
    <subcellularLocation>
        <location>Plastid</location>
        <location>Chloroplast thylakoid lumen</location>
    </subcellularLocation>
</comment>
<comment type="similarity">
    <text evidence="4">Belongs to the tyrosinase family.</text>
</comment>
<protein>
    <recommendedName>
        <fullName>Polyphenol oxidase A, chloroplastic</fullName>
        <shortName>PPO</shortName>
        <ecNumber>1.10.3.1</ecNumber>
    </recommendedName>
    <alternativeName>
        <fullName>Catechol oxidase</fullName>
    </alternativeName>
</protein>
<keyword id="KW-0002">3D-structure</keyword>
<keyword id="KW-0150">Chloroplast</keyword>
<keyword id="KW-0186">Copper</keyword>
<keyword id="KW-1015">Disulfide bond</keyword>
<keyword id="KW-0479">Metal-binding</keyword>
<keyword id="KW-0560">Oxidoreductase</keyword>
<keyword id="KW-0934">Plastid</keyword>
<keyword id="KW-1185">Reference proteome</keyword>
<keyword id="KW-0883">Thioether bond</keyword>
<keyword id="KW-0793">Thylakoid</keyword>
<keyword id="KW-0809">Transit peptide</keyword>
<organism>
    <name type="scientific">Solanum lycopersicum</name>
    <name type="common">Tomato</name>
    <name type="synonym">Lycopersicon esculentum</name>
    <dbReference type="NCBI Taxonomy" id="4081"/>
    <lineage>
        <taxon>Eukaryota</taxon>
        <taxon>Viridiplantae</taxon>
        <taxon>Streptophyta</taxon>
        <taxon>Embryophyta</taxon>
        <taxon>Tracheophyta</taxon>
        <taxon>Spermatophyta</taxon>
        <taxon>Magnoliopsida</taxon>
        <taxon>eudicotyledons</taxon>
        <taxon>Gunneridae</taxon>
        <taxon>Pentapetalae</taxon>
        <taxon>asterids</taxon>
        <taxon>lamiids</taxon>
        <taxon>Solanales</taxon>
        <taxon>Solanaceae</taxon>
        <taxon>Solanoideae</taxon>
        <taxon>Solaneae</taxon>
        <taxon>Solanum</taxon>
        <taxon>Solanum subgen. Lycopersicon</taxon>
    </lineage>
</organism>
<proteinExistence type="evidence at protein level"/>
<feature type="transit peptide" description="Chloroplast" evidence="1">
    <location>
        <begin position="1"/>
        <end position="87"/>
    </location>
</feature>
<feature type="chain" id="PRO_0000035910" description="Polyphenol oxidase A, chloroplastic">
    <location>
        <begin position="88"/>
        <end position="630"/>
    </location>
</feature>
<feature type="region of interest" description="Disordered" evidence="3">
    <location>
        <begin position="1"/>
        <end position="25"/>
    </location>
</feature>
<feature type="binding site" evidence="2">
    <location>
        <position position="180"/>
    </location>
    <ligand>
        <name>Cu cation</name>
        <dbReference type="ChEBI" id="CHEBI:23378"/>
        <label>A</label>
    </ligand>
</feature>
<feature type="binding site" evidence="2">
    <location>
        <position position="198"/>
    </location>
    <ligand>
        <name>Cu cation</name>
        <dbReference type="ChEBI" id="CHEBI:23378"/>
        <label>A</label>
    </ligand>
</feature>
<feature type="binding site" evidence="2">
    <location>
        <position position="207"/>
    </location>
    <ligand>
        <name>Cu cation</name>
        <dbReference type="ChEBI" id="CHEBI:23378"/>
        <label>A</label>
    </ligand>
</feature>
<feature type="binding site" evidence="2">
    <location>
        <position position="328"/>
    </location>
    <ligand>
        <name>Cu cation</name>
        <dbReference type="ChEBI" id="CHEBI:23378"/>
        <label>B</label>
    </ligand>
</feature>
<feature type="binding site" evidence="2">
    <location>
        <position position="332"/>
    </location>
    <ligand>
        <name>Cu cation</name>
        <dbReference type="ChEBI" id="CHEBI:23378"/>
        <label>B</label>
    </ligand>
</feature>
<feature type="binding site" evidence="2">
    <location>
        <position position="370"/>
    </location>
    <ligand>
        <name>Cu cation</name>
        <dbReference type="ChEBI" id="CHEBI:23378"/>
        <label>B</label>
    </ligand>
</feature>
<feature type="disulfide bond" evidence="1">
    <location>
        <begin position="98"/>
        <end position="114"/>
    </location>
</feature>
<feature type="disulfide bond" evidence="1">
    <location>
        <begin position="113"/>
        <end position="181"/>
    </location>
</feature>
<feature type="cross-link" description="2'-(S-cysteinyl)-histidine (Cys-His)" evidence="1">
    <location>
        <begin position="184"/>
        <end position="198"/>
    </location>
</feature>
<feature type="helix" evidence="5">
    <location>
        <begin position="121"/>
        <end position="123"/>
    </location>
</feature>
<feature type="strand" evidence="5">
    <location>
        <begin position="136"/>
        <end position="138"/>
    </location>
</feature>
<feature type="helix" evidence="5">
    <location>
        <begin position="146"/>
        <end position="165"/>
    </location>
</feature>
<feature type="helix" evidence="5">
    <location>
        <begin position="173"/>
        <end position="184"/>
    </location>
</feature>
<feature type="strand" evidence="5">
    <location>
        <begin position="198"/>
        <end position="200"/>
    </location>
</feature>
<feature type="helix" evidence="5">
    <location>
        <begin position="203"/>
        <end position="221"/>
    </location>
</feature>
<feature type="helix" evidence="5">
    <location>
        <begin position="237"/>
        <end position="239"/>
    </location>
</feature>
<feature type="helix" evidence="5">
    <location>
        <begin position="244"/>
        <end position="247"/>
    </location>
</feature>
<feature type="helix" evidence="5">
    <location>
        <begin position="281"/>
        <end position="296"/>
    </location>
</feature>
<feature type="turn" evidence="5">
    <location>
        <begin position="297"/>
        <end position="299"/>
    </location>
</feature>
<feature type="helix" evidence="5">
    <location>
        <begin position="303"/>
        <end position="307"/>
    </location>
</feature>
<feature type="helix" evidence="5">
    <location>
        <begin position="322"/>
        <end position="325"/>
    </location>
</feature>
<feature type="helix" evidence="5">
    <location>
        <begin position="328"/>
        <end position="335"/>
    </location>
</feature>
<feature type="strand" evidence="5">
    <location>
        <begin position="346"/>
        <end position="348"/>
    </location>
</feature>
<feature type="turn" evidence="5">
    <location>
        <begin position="352"/>
        <end position="355"/>
    </location>
</feature>
<feature type="turn" evidence="5">
    <location>
        <begin position="357"/>
        <end position="359"/>
    </location>
</feature>
<feature type="helix" evidence="5">
    <location>
        <begin position="360"/>
        <end position="362"/>
    </location>
</feature>
<feature type="helix" evidence="5">
    <location>
        <begin position="365"/>
        <end position="381"/>
    </location>
</feature>
<feature type="helix" evidence="5">
    <location>
        <begin position="393"/>
        <end position="396"/>
    </location>
</feature>
<feature type="strand" evidence="5">
    <location>
        <begin position="399"/>
        <end position="403"/>
    </location>
</feature>
<feature type="strand" evidence="5">
    <location>
        <begin position="409"/>
        <end position="413"/>
    </location>
</feature>
<feature type="helix" evidence="5">
    <location>
        <begin position="414"/>
        <end position="416"/>
    </location>
</feature>
<feature type="helix" evidence="5">
    <location>
        <begin position="420"/>
        <end position="423"/>
    </location>
</feature>
<feature type="strand" evidence="5">
    <location>
        <begin position="425"/>
        <end position="427"/>
    </location>
</feature>
<feature type="helix" evidence="5">
    <location>
        <begin position="433"/>
        <end position="436"/>
    </location>
</feature>
<feature type="helix" evidence="5">
    <location>
        <begin position="450"/>
        <end position="452"/>
    </location>
</feature>
<feature type="helix" evidence="5">
    <location>
        <begin position="456"/>
        <end position="459"/>
    </location>
</feature>
<feature type="strand" evidence="5">
    <location>
        <begin position="461"/>
        <end position="463"/>
    </location>
</feature>
<feature type="strand" evidence="5">
    <location>
        <begin position="469"/>
        <end position="474"/>
    </location>
</feature>
<feature type="helix" evidence="5">
    <location>
        <begin position="482"/>
        <end position="487"/>
    </location>
</feature>
<feature type="strand" evidence="5">
    <location>
        <begin position="488"/>
        <end position="499"/>
    </location>
</feature>
<feature type="strand" evidence="5">
    <location>
        <begin position="505"/>
        <end position="512"/>
    </location>
</feature>
<feature type="strand" evidence="5">
    <location>
        <begin position="527"/>
        <end position="533"/>
    </location>
</feature>
<feature type="strand" evidence="5">
    <location>
        <begin position="547"/>
        <end position="554"/>
    </location>
</feature>
<feature type="helix" evidence="5">
    <location>
        <begin position="556"/>
        <end position="562"/>
    </location>
</feature>
<feature type="strand" evidence="5">
    <location>
        <begin position="568"/>
        <end position="579"/>
    </location>
</feature>
<feature type="strand" evidence="5">
    <location>
        <begin position="582"/>
        <end position="591"/>
    </location>
</feature>
<dbReference type="EC" id="1.10.3.1"/>
<dbReference type="EMBL" id="Z12833">
    <property type="protein sequence ID" value="CAA78295.1"/>
    <property type="molecule type" value="Genomic_DNA"/>
</dbReference>
<dbReference type="PIR" id="S33539">
    <property type="entry name" value="S33539"/>
</dbReference>
<dbReference type="PDB" id="6HQI">
    <property type="method" value="X-ray"/>
    <property type="resolution" value="1.85 A"/>
    <property type="chains" value="A=88-591"/>
</dbReference>
<dbReference type="PDB" id="6HQJ">
    <property type="method" value="X-ray"/>
    <property type="resolution" value="1.80 A"/>
    <property type="chains" value="A=88-591"/>
</dbReference>
<dbReference type="PDBsum" id="6HQI"/>
<dbReference type="PDBsum" id="6HQJ"/>
<dbReference type="SMR" id="Q08303"/>
<dbReference type="STRING" id="4081.Q08303"/>
<dbReference type="InParanoid" id="Q08303"/>
<dbReference type="BioCyc" id="MetaCyc:MONOMER-16344"/>
<dbReference type="Proteomes" id="UP000004994">
    <property type="component" value="Unplaced"/>
</dbReference>
<dbReference type="ExpressionAtlas" id="Q08303">
    <property type="expression patterns" value="baseline and differential"/>
</dbReference>
<dbReference type="GO" id="GO:0009543">
    <property type="term" value="C:chloroplast thylakoid lumen"/>
    <property type="evidence" value="ECO:0007669"/>
    <property type="project" value="UniProtKB-SubCell"/>
</dbReference>
<dbReference type="GO" id="GO:0004097">
    <property type="term" value="F:catechol oxidase activity"/>
    <property type="evidence" value="ECO:0007669"/>
    <property type="project" value="UniProtKB-EC"/>
</dbReference>
<dbReference type="GO" id="GO:0046872">
    <property type="term" value="F:metal ion binding"/>
    <property type="evidence" value="ECO:0007669"/>
    <property type="project" value="UniProtKB-KW"/>
</dbReference>
<dbReference type="GO" id="GO:0046148">
    <property type="term" value="P:pigment biosynthetic process"/>
    <property type="evidence" value="ECO:0007669"/>
    <property type="project" value="InterPro"/>
</dbReference>
<dbReference type="Gene3D" id="1.10.1280.10">
    <property type="entry name" value="Di-copper center containing domain from catechol oxidase"/>
    <property type="match status" value="1"/>
</dbReference>
<dbReference type="InterPro" id="IPR008922">
    <property type="entry name" value="Di-copper_centre_dom_sf"/>
</dbReference>
<dbReference type="InterPro" id="IPR016213">
    <property type="entry name" value="Polyphenol_oxidase"/>
</dbReference>
<dbReference type="InterPro" id="IPR022740">
    <property type="entry name" value="Polyphenol_oxidase_C"/>
</dbReference>
<dbReference type="InterPro" id="IPR022739">
    <property type="entry name" value="Polyphenol_oxidase_cen"/>
</dbReference>
<dbReference type="InterPro" id="IPR050316">
    <property type="entry name" value="Tyrosinase/Hemocyanin"/>
</dbReference>
<dbReference type="InterPro" id="IPR002227">
    <property type="entry name" value="Tyrosinase_Cu-bd"/>
</dbReference>
<dbReference type="PANTHER" id="PTHR11474:SF111">
    <property type="entry name" value="POLYPHENOL OXIDASE A, CHLOROPLASTIC"/>
    <property type="match status" value="1"/>
</dbReference>
<dbReference type="PANTHER" id="PTHR11474">
    <property type="entry name" value="TYROSINASE FAMILY MEMBER"/>
    <property type="match status" value="1"/>
</dbReference>
<dbReference type="Pfam" id="PF12142">
    <property type="entry name" value="PPO1_DWL"/>
    <property type="match status" value="1"/>
</dbReference>
<dbReference type="Pfam" id="PF12143">
    <property type="entry name" value="PPO1_KFDV"/>
    <property type="match status" value="1"/>
</dbReference>
<dbReference type="Pfam" id="PF00264">
    <property type="entry name" value="Tyrosinase"/>
    <property type="match status" value="1"/>
</dbReference>
<dbReference type="PIRSF" id="PIRSF000290">
    <property type="entry name" value="PPO_plant"/>
    <property type="match status" value="1"/>
</dbReference>
<dbReference type="PRINTS" id="PR00092">
    <property type="entry name" value="TYROSINASE"/>
</dbReference>
<dbReference type="SUPFAM" id="SSF48056">
    <property type="entry name" value="Di-copper centre-containing domain"/>
    <property type="match status" value="1"/>
</dbReference>
<dbReference type="PROSITE" id="PS00497">
    <property type="entry name" value="TYROSINASE_1"/>
    <property type="match status" value="1"/>
</dbReference>
<dbReference type="PROSITE" id="PS00498">
    <property type="entry name" value="TYROSINASE_2"/>
    <property type="match status" value="1"/>
</dbReference>
<accession>Q08303</accession>
<sequence length="630" mass="70616">MASLCSNSSSTSLKTPFTSSTTCLSSTPTASQLFLHGKRNKTFKVSCKVTNTNGNQDETNSVDRRNVLLGLGGLYGVANAIPLAASAAPTPPPDLSSCNKPKINATTEVPYFCCAPKPDDMSKVPYYKFPSVTKLRIRPPAHALDEAYIAKYNLAISRMKDLDKTQPDNPIGFKQQANIHCAYCNGGYSIDGKVLQVHNSWLFFPFHRWYLYFYERILGSLIDDPTFGLPFWNWDHPKGMRFPPMFDVPGTALYDERRGDQIHNGNGIDLGYFGDQVETTQLQLMTNNLTLMYRQLVTNSPCPLMSLVDLTLFGSTVEDAGTVENIPHSPVHIWVGTRRGSVLPVGKISNGEDMGNFYSAGLDPLFYCHHSNVDRMWNEWKATGGKRTDIQNKDWLNSEFFFYDENGNPFKVRVRDCLDTKKMGYDYHATATPWRNFKPKTKASAGKVNTGSIPPESQVFPLAKLDKAISFSINRPASSRTQQEKNAQEEVLTFNAIKYDNRDYIRFDVFLNVDNNVNANELDKAEFAGSYTSLPHVHRVGDPKHTATATLRLAITELLEDIGLEDEDTIAVTLVPKKGDISIGGVEIKLAIVKLVCVVNLLTLQLNKDRFCYDSVFVCWFVCLFFNFHV</sequence>